<feature type="chain" id="PRO_1000017674" description="Adenosine deaminase">
    <location>
        <begin position="1"/>
        <end position="362"/>
    </location>
</feature>
<feature type="active site" description="Proton donor" evidence="1">
    <location>
        <position position="211"/>
    </location>
</feature>
<feature type="binding site" evidence="1">
    <location>
        <position position="19"/>
    </location>
    <ligand>
        <name>Zn(2+)</name>
        <dbReference type="ChEBI" id="CHEBI:29105"/>
        <note>catalytic</note>
    </ligand>
</feature>
<feature type="binding site" evidence="1">
    <location>
        <position position="21"/>
    </location>
    <ligand>
        <name>substrate</name>
    </ligand>
</feature>
<feature type="binding site" evidence="1">
    <location>
        <position position="21"/>
    </location>
    <ligand>
        <name>Zn(2+)</name>
        <dbReference type="ChEBI" id="CHEBI:29105"/>
        <note>catalytic</note>
    </ligand>
</feature>
<feature type="binding site" evidence="1">
    <location>
        <position position="23"/>
    </location>
    <ligand>
        <name>substrate</name>
    </ligand>
</feature>
<feature type="binding site" evidence="1">
    <location>
        <position position="181"/>
    </location>
    <ligand>
        <name>substrate</name>
    </ligand>
</feature>
<feature type="binding site" evidence="1">
    <location>
        <position position="208"/>
    </location>
    <ligand>
        <name>Zn(2+)</name>
        <dbReference type="ChEBI" id="CHEBI:29105"/>
        <note>catalytic</note>
    </ligand>
</feature>
<feature type="binding site" evidence="1">
    <location>
        <position position="300"/>
    </location>
    <ligand>
        <name>Zn(2+)</name>
        <dbReference type="ChEBI" id="CHEBI:29105"/>
        <note>catalytic</note>
    </ligand>
</feature>
<feature type="site" description="Important for catalytic activity" evidence="1">
    <location>
        <position position="232"/>
    </location>
</feature>
<accession>A0PNJ1</accession>
<evidence type="ECO:0000255" key="1">
    <source>
        <dbReference type="HAMAP-Rule" id="MF_00540"/>
    </source>
</evidence>
<reference key="1">
    <citation type="journal article" date="2007" name="Genome Res.">
        <title>Reductive evolution and niche adaptation inferred from the genome of Mycobacterium ulcerans, the causative agent of Buruli ulcer.</title>
        <authorList>
            <person name="Stinear T.P."/>
            <person name="Seemann T."/>
            <person name="Pidot S."/>
            <person name="Frigui W."/>
            <person name="Reysset G."/>
            <person name="Garnier T."/>
            <person name="Meurice G."/>
            <person name="Simon D."/>
            <person name="Bouchier C."/>
            <person name="Ma L."/>
            <person name="Tichit M."/>
            <person name="Porter J.L."/>
            <person name="Ryan J."/>
            <person name="Johnson P.D.R."/>
            <person name="Davies J.K."/>
            <person name="Jenkin G.A."/>
            <person name="Small P.L.C."/>
            <person name="Jones L.M."/>
            <person name="Tekaia F."/>
            <person name="Laval F."/>
            <person name="Daffe M."/>
            <person name="Parkhill J."/>
            <person name="Cole S.T."/>
        </authorList>
    </citation>
    <scope>NUCLEOTIDE SEQUENCE [LARGE SCALE GENOMIC DNA]</scope>
    <source>
        <strain>Agy99</strain>
    </source>
</reference>
<protein>
    <recommendedName>
        <fullName evidence="1">Adenosine deaminase</fullName>
        <ecNumber evidence="1">3.5.4.4</ecNumber>
    </recommendedName>
    <alternativeName>
        <fullName evidence="1">Adenosine aminohydrolase</fullName>
    </alternativeName>
</protein>
<name>ADD_MYCUA</name>
<gene>
    <name evidence="1" type="primary">add</name>
    <name type="ordered locus">MUL_1364</name>
</gene>
<proteinExistence type="inferred from homology"/>
<keyword id="KW-0378">Hydrolase</keyword>
<keyword id="KW-0479">Metal-binding</keyword>
<keyword id="KW-0546">Nucleotide metabolism</keyword>
<keyword id="KW-0862">Zinc</keyword>
<comment type="function">
    <text evidence="1">Catalyzes the hydrolytic deamination of adenosine and 2-deoxyadenosine.</text>
</comment>
<comment type="catalytic activity">
    <reaction evidence="1">
        <text>adenosine + H2O + H(+) = inosine + NH4(+)</text>
        <dbReference type="Rhea" id="RHEA:24408"/>
        <dbReference type="ChEBI" id="CHEBI:15377"/>
        <dbReference type="ChEBI" id="CHEBI:15378"/>
        <dbReference type="ChEBI" id="CHEBI:16335"/>
        <dbReference type="ChEBI" id="CHEBI:17596"/>
        <dbReference type="ChEBI" id="CHEBI:28938"/>
        <dbReference type="EC" id="3.5.4.4"/>
    </reaction>
    <physiologicalReaction direction="left-to-right" evidence="1">
        <dbReference type="Rhea" id="RHEA:24409"/>
    </physiologicalReaction>
</comment>
<comment type="catalytic activity">
    <reaction evidence="1">
        <text>2'-deoxyadenosine + H2O + H(+) = 2'-deoxyinosine + NH4(+)</text>
        <dbReference type="Rhea" id="RHEA:28190"/>
        <dbReference type="ChEBI" id="CHEBI:15377"/>
        <dbReference type="ChEBI" id="CHEBI:15378"/>
        <dbReference type="ChEBI" id="CHEBI:17256"/>
        <dbReference type="ChEBI" id="CHEBI:28938"/>
        <dbReference type="ChEBI" id="CHEBI:28997"/>
        <dbReference type="EC" id="3.5.4.4"/>
    </reaction>
    <physiologicalReaction direction="left-to-right" evidence="1">
        <dbReference type="Rhea" id="RHEA:28191"/>
    </physiologicalReaction>
</comment>
<comment type="cofactor">
    <cofactor evidence="1">
        <name>Zn(2+)</name>
        <dbReference type="ChEBI" id="CHEBI:29105"/>
    </cofactor>
    <text evidence="1">Binds 1 zinc ion per subunit.</text>
</comment>
<comment type="similarity">
    <text evidence="1">Belongs to the metallo-dependent hydrolases superfamily. Adenosine and AMP deaminases family. Adenosine deaminase subfamily.</text>
</comment>
<dbReference type="EC" id="3.5.4.4" evidence="1"/>
<dbReference type="EMBL" id="CP000325">
    <property type="protein sequence ID" value="ABL03910.1"/>
    <property type="molecule type" value="Genomic_DNA"/>
</dbReference>
<dbReference type="RefSeq" id="WP_011739531.1">
    <property type="nucleotide sequence ID" value="NC_008611.1"/>
</dbReference>
<dbReference type="SMR" id="A0PNJ1"/>
<dbReference type="KEGG" id="mul:MUL_1364"/>
<dbReference type="eggNOG" id="COG1816">
    <property type="taxonomic scope" value="Bacteria"/>
</dbReference>
<dbReference type="HOGENOM" id="CLU_039228_0_0_11"/>
<dbReference type="Proteomes" id="UP000000765">
    <property type="component" value="Chromosome"/>
</dbReference>
<dbReference type="GO" id="GO:0005829">
    <property type="term" value="C:cytosol"/>
    <property type="evidence" value="ECO:0007669"/>
    <property type="project" value="TreeGrafter"/>
</dbReference>
<dbReference type="GO" id="GO:0046936">
    <property type="term" value="F:2'-deoxyadenosine deaminase activity"/>
    <property type="evidence" value="ECO:0007669"/>
    <property type="project" value="RHEA"/>
</dbReference>
<dbReference type="GO" id="GO:0004000">
    <property type="term" value="F:adenosine deaminase activity"/>
    <property type="evidence" value="ECO:0007669"/>
    <property type="project" value="UniProtKB-UniRule"/>
</dbReference>
<dbReference type="GO" id="GO:0008270">
    <property type="term" value="F:zinc ion binding"/>
    <property type="evidence" value="ECO:0007669"/>
    <property type="project" value="UniProtKB-UniRule"/>
</dbReference>
<dbReference type="GO" id="GO:0006154">
    <property type="term" value="P:adenosine catabolic process"/>
    <property type="evidence" value="ECO:0007669"/>
    <property type="project" value="TreeGrafter"/>
</dbReference>
<dbReference type="GO" id="GO:0043103">
    <property type="term" value="P:hypoxanthine salvage"/>
    <property type="evidence" value="ECO:0007669"/>
    <property type="project" value="TreeGrafter"/>
</dbReference>
<dbReference type="GO" id="GO:0046103">
    <property type="term" value="P:inosine biosynthetic process"/>
    <property type="evidence" value="ECO:0007669"/>
    <property type="project" value="TreeGrafter"/>
</dbReference>
<dbReference type="GO" id="GO:0009117">
    <property type="term" value="P:nucleotide metabolic process"/>
    <property type="evidence" value="ECO:0007669"/>
    <property type="project" value="UniProtKB-KW"/>
</dbReference>
<dbReference type="GO" id="GO:0009168">
    <property type="term" value="P:purine ribonucleoside monophosphate biosynthetic process"/>
    <property type="evidence" value="ECO:0007669"/>
    <property type="project" value="UniProtKB-UniRule"/>
</dbReference>
<dbReference type="FunFam" id="3.20.20.140:FF:000020">
    <property type="entry name" value="Adenosine deaminase"/>
    <property type="match status" value="1"/>
</dbReference>
<dbReference type="Gene3D" id="3.20.20.140">
    <property type="entry name" value="Metal-dependent hydrolases"/>
    <property type="match status" value="1"/>
</dbReference>
<dbReference type="HAMAP" id="MF_00540">
    <property type="entry name" value="A_deaminase"/>
    <property type="match status" value="1"/>
</dbReference>
<dbReference type="InterPro" id="IPR028893">
    <property type="entry name" value="A_deaminase"/>
</dbReference>
<dbReference type="InterPro" id="IPR001365">
    <property type="entry name" value="A_deaminase_dom"/>
</dbReference>
<dbReference type="InterPro" id="IPR006330">
    <property type="entry name" value="Ado/ade_deaminase"/>
</dbReference>
<dbReference type="InterPro" id="IPR032466">
    <property type="entry name" value="Metal_Hydrolase"/>
</dbReference>
<dbReference type="NCBIfam" id="TIGR01430">
    <property type="entry name" value="aden_deam"/>
    <property type="match status" value="1"/>
</dbReference>
<dbReference type="NCBIfam" id="NF006847">
    <property type="entry name" value="PRK09358.1-2"/>
    <property type="match status" value="1"/>
</dbReference>
<dbReference type="PANTHER" id="PTHR11409">
    <property type="entry name" value="ADENOSINE DEAMINASE"/>
    <property type="match status" value="1"/>
</dbReference>
<dbReference type="PANTHER" id="PTHR11409:SF43">
    <property type="entry name" value="ADENOSINE DEAMINASE"/>
    <property type="match status" value="1"/>
</dbReference>
<dbReference type="Pfam" id="PF00962">
    <property type="entry name" value="A_deaminase"/>
    <property type="match status" value="1"/>
</dbReference>
<dbReference type="SUPFAM" id="SSF51556">
    <property type="entry name" value="Metallo-dependent hydrolases"/>
    <property type="match status" value="1"/>
</dbReference>
<organism>
    <name type="scientific">Mycobacterium ulcerans (strain Agy99)</name>
    <dbReference type="NCBI Taxonomy" id="362242"/>
    <lineage>
        <taxon>Bacteria</taxon>
        <taxon>Bacillati</taxon>
        <taxon>Actinomycetota</taxon>
        <taxon>Actinomycetes</taxon>
        <taxon>Mycobacteriales</taxon>
        <taxon>Mycobacteriaceae</taxon>
        <taxon>Mycobacterium</taxon>
        <taxon>Mycobacterium ulcerans group</taxon>
    </lineage>
</organism>
<sequence>MTDMPTLDAIRQAPKALLHDHLDGGLRPETVLDIAGQVGYDGLPSTDAGELASWFRTQSHSGSLERYLEPFSHTVAVMQTPEALYRVAYECVEDLAADAVVYAEIRFAPELHINRGLTFDEIVDAVLAGFAAGERACAGAGCPIKVRLLVTAMRHAAMSREIAELAIRFRDKGVVGFDIAGAEAGYPPSRHLDAFEYMRDNNARFTIHAGEAFGLPSIHEAIAFCGADRLGHGVRIVDDIEVGLDGDVKLGRLAAILRDKRIPLELCPSSNVQTGAVASIAEHPFDLLARSRFRVTVNTDNRLMSDTSMSQEMYRLVETFGYGWSDIQRFTINAMKSAFIAFDERLEIIDEVIKPRFAVLIG</sequence>